<protein>
    <recommendedName>
        <fullName evidence="1">Ribosomal RNA small subunit methyltransferase H</fullName>
        <ecNumber evidence="1">2.1.1.199</ecNumber>
    </recommendedName>
    <alternativeName>
        <fullName evidence="1">16S rRNA m(4)C1402 methyltransferase</fullName>
    </alternativeName>
    <alternativeName>
        <fullName evidence="1">rRNA (cytosine-N(4)-)-methyltransferase RsmH</fullName>
    </alternativeName>
</protein>
<name>RSMH_ROSDO</name>
<organism>
    <name type="scientific">Roseobacter denitrificans (strain ATCC 33942 / OCh 114)</name>
    <name type="common">Erythrobacter sp. (strain OCh 114)</name>
    <name type="synonym">Roseobacter denitrificans</name>
    <dbReference type="NCBI Taxonomy" id="375451"/>
    <lineage>
        <taxon>Bacteria</taxon>
        <taxon>Pseudomonadati</taxon>
        <taxon>Pseudomonadota</taxon>
        <taxon>Alphaproteobacteria</taxon>
        <taxon>Rhodobacterales</taxon>
        <taxon>Roseobacteraceae</taxon>
        <taxon>Roseobacter</taxon>
    </lineage>
</organism>
<evidence type="ECO:0000255" key="1">
    <source>
        <dbReference type="HAMAP-Rule" id="MF_01007"/>
    </source>
</evidence>
<sequence length="330" mass="35024">MSAAATADTTSPHIPVLLPAILDAVAPVQGVWLDGTFGAGGYTRGLLEAGADRVIAVDRDPLAFEMAADWAGSYGTRLVQQPGVFSEMDTYAVALDGVVLDLGVSSMQLDLAERGFSFMRDGPLDMRMSQEGPSAADIVNEASAETLANILFQYGEERASRRIAKAILTERALAPITTTLHLAGIIERCLPRAKPGQSHPATRSFQALRIAVNDEYGELYQGLMAAERALKPGGQLAVVTFHSVEDRMVKRFLTARAGAGGNANRFAPEVQRDAPAFTLRSRKAIVADDAEVAANPRARSAKLRIAVRTQAPAGVIDAKSVGMPVVKVGN</sequence>
<proteinExistence type="inferred from homology"/>
<accession>Q163I0</accession>
<feature type="chain" id="PRO_1000062836" description="Ribosomal RNA small subunit methyltransferase H">
    <location>
        <begin position="1"/>
        <end position="330"/>
    </location>
</feature>
<feature type="binding site" evidence="1">
    <location>
        <begin position="40"/>
        <end position="42"/>
    </location>
    <ligand>
        <name>S-adenosyl-L-methionine</name>
        <dbReference type="ChEBI" id="CHEBI:59789"/>
    </ligand>
</feature>
<feature type="binding site" evidence="1">
    <location>
        <position position="58"/>
    </location>
    <ligand>
        <name>S-adenosyl-L-methionine</name>
        <dbReference type="ChEBI" id="CHEBI:59789"/>
    </ligand>
</feature>
<feature type="binding site" evidence="1">
    <location>
        <position position="85"/>
    </location>
    <ligand>
        <name>S-adenosyl-L-methionine</name>
        <dbReference type="ChEBI" id="CHEBI:59789"/>
    </ligand>
</feature>
<feature type="binding site" evidence="1">
    <location>
        <position position="101"/>
    </location>
    <ligand>
        <name>S-adenosyl-L-methionine</name>
        <dbReference type="ChEBI" id="CHEBI:59789"/>
    </ligand>
</feature>
<feature type="binding site" evidence="1">
    <location>
        <position position="108"/>
    </location>
    <ligand>
        <name>S-adenosyl-L-methionine</name>
        <dbReference type="ChEBI" id="CHEBI:59789"/>
    </ligand>
</feature>
<keyword id="KW-0963">Cytoplasm</keyword>
<keyword id="KW-0489">Methyltransferase</keyword>
<keyword id="KW-1185">Reference proteome</keyword>
<keyword id="KW-0698">rRNA processing</keyword>
<keyword id="KW-0949">S-adenosyl-L-methionine</keyword>
<keyword id="KW-0808">Transferase</keyword>
<dbReference type="EC" id="2.1.1.199" evidence="1"/>
<dbReference type="EMBL" id="CP000362">
    <property type="protein sequence ID" value="ABG32863.1"/>
    <property type="molecule type" value="Genomic_DNA"/>
</dbReference>
<dbReference type="RefSeq" id="WP_011569479.1">
    <property type="nucleotide sequence ID" value="NC_008209.1"/>
</dbReference>
<dbReference type="SMR" id="Q163I0"/>
<dbReference type="STRING" id="375451.RD1_3368"/>
<dbReference type="KEGG" id="rde:RD1_3368"/>
<dbReference type="eggNOG" id="COG0275">
    <property type="taxonomic scope" value="Bacteria"/>
</dbReference>
<dbReference type="HOGENOM" id="CLU_038422_1_1_5"/>
<dbReference type="OrthoDB" id="9806637at2"/>
<dbReference type="Proteomes" id="UP000007029">
    <property type="component" value="Chromosome"/>
</dbReference>
<dbReference type="GO" id="GO:0005737">
    <property type="term" value="C:cytoplasm"/>
    <property type="evidence" value="ECO:0007669"/>
    <property type="project" value="UniProtKB-SubCell"/>
</dbReference>
<dbReference type="GO" id="GO:0071424">
    <property type="term" value="F:rRNA (cytosine-N4-)-methyltransferase activity"/>
    <property type="evidence" value="ECO:0007669"/>
    <property type="project" value="UniProtKB-UniRule"/>
</dbReference>
<dbReference type="GO" id="GO:0070475">
    <property type="term" value="P:rRNA base methylation"/>
    <property type="evidence" value="ECO:0007669"/>
    <property type="project" value="UniProtKB-UniRule"/>
</dbReference>
<dbReference type="Gene3D" id="1.10.150.170">
    <property type="entry name" value="Putative methyltransferase TM0872, insert domain"/>
    <property type="match status" value="1"/>
</dbReference>
<dbReference type="Gene3D" id="3.40.50.150">
    <property type="entry name" value="Vaccinia Virus protein VP39"/>
    <property type="match status" value="1"/>
</dbReference>
<dbReference type="HAMAP" id="MF_01007">
    <property type="entry name" value="16SrRNA_methyltr_H"/>
    <property type="match status" value="1"/>
</dbReference>
<dbReference type="InterPro" id="IPR002903">
    <property type="entry name" value="RsmH"/>
</dbReference>
<dbReference type="InterPro" id="IPR023397">
    <property type="entry name" value="SAM-dep_MeTrfase_MraW_recog"/>
</dbReference>
<dbReference type="InterPro" id="IPR029063">
    <property type="entry name" value="SAM-dependent_MTases_sf"/>
</dbReference>
<dbReference type="NCBIfam" id="TIGR00006">
    <property type="entry name" value="16S rRNA (cytosine(1402)-N(4))-methyltransferase RsmH"/>
    <property type="match status" value="1"/>
</dbReference>
<dbReference type="PANTHER" id="PTHR11265:SF0">
    <property type="entry name" value="12S RRNA N4-METHYLCYTIDINE METHYLTRANSFERASE"/>
    <property type="match status" value="1"/>
</dbReference>
<dbReference type="PANTHER" id="PTHR11265">
    <property type="entry name" value="S-ADENOSYL-METHYLTRANSFERASE MRAW"/>
    <property type="match status" value="1"/>
</dbReference>
<dbReference type="Pfam" id="PF01795">
    <property type="entry name" value="Methyltransf_5"/>
    <property type="match status" value="1"/>
</dbReference>
<dbReference type="PIRSF" id="PIRSF004486">
    <property type="entry name" value="MraW"/>
    <property type="match status" value="1"/>
</dbReference>
<dbReference type="SUPFAM" id="SSF81799">
    <property type="entry name" value="Putative methyltransferase TM0872, insert domain"/>
    <property type="match status" value="1"/>
</dbReference>
<dbReference type="SUPFAM" id="SSF53335">
    <property type="entry name" value="S-adenosyl-L-methionine-dependent methyltransferases"/>
    <property type="match status" value="1"/>
</dbReference>
<comment type="function">
    <text evidence="1">Specifically methylates the N4 position of cytidine in position 1402 (C1402) of 16S rRNA.</text>
</comment>
<comment type="catalytic activity">
    <reaction evidence="1">
        <text>cytidine(1402) in 16S rRNA + S-adenosyl-L-methionine = N(4)-methylcytidine(1402) in 16S rRNA + S-adenosyl-L-homocysteine + H(+)</text>
        <dbReference type="Rhea" id="RHEA:42928"/>
        <dbReference type="Rhea" id="RHEA-COMP:10286"/>
        <dbReference type="Rhea" id="RHEA-COMP:10287"/>
        <dbReference type="ChEBI" id="CHEBI:15378"/>
        <dbReference type="ChEBI" id="CHEBI:57856"/>
        <dbReference type="ChEBI" id="CHEBI:59789"/>
        <dbReference type="ChEBI" id="CHEBI:74506"/>
        <dbReference type="ChEBI" id="CHEBI:82748"/>
        <dbReference type="EC" id="2.1.1.199"/>
    </reaction>
</comment>
<comment type="subcellular location">
    <subcellularLocation>
        <location evidence="1">Cytoplasm</location>
    </subcellularLocation>
</comment>
<comment type="similarity">
    <text evidence="1">Belongs to the methyltransferase superfamily. RsmH family.</text>
</comment>
<reference key="1">
    <citation type="journal article" date="2007" name="J. Bacteriol.">
        <title>The complete genome sequence of Roseobacter denitrificans reveals a mixotrophic rather than photosynthetic metabolism.</title>
        <authorList>
            <person name="Swingley W.D."/>
            <person name="Sadekar S."/>
            <person name="Mastrian S.D."/>
            <person name="Matthies H.J."/>
            <person name="Hao J."/>
            <person name="Ramos H."/>
            <person name="Acharya C.R."/>
            <person name="Conrad A.L."/>
            <person name="Taylor H.L."/>
            <person name="Dejesa L.C."/>
            <person name="Shah M.K."/>
            <person name="O'Huallachain M.E."/>
            <person name="Lince M.T."/>
            <person name="Blankenship R.E."/>
            <person name="Beatty J.T."/>
            <person name="Touchman J.W."/>
        </authorList>
    </citation>
    <scope>NUCLEOTIDE SEQUENCE [LARGE SCALE GENOMIC DNA]</scope>
    <source>
        <strain>ATCC 33942 / OCh 114</strain>
    </source>
</reference>
<gene>
    <name evidence="1" type="primary">rsmH</name>
    <name type="synonym">mraW</name>
    <name type="ordered locus">RD1_3368</name>
</gene>